<organism>
    <name type="scientific">Arabidopsis thaliana</name>
    <name type="common">Mouse-ear cress</name>
    <dbReference type="NCBI Taxonomy" id="3702"/>
    <lineage>
        <taxon>Eukaryota</taxon>
        <taxon>Viridiplantae</taxon>
        <taxon>Streptophyta</taxon>
        <taxon>Embryophyta</taxon>
        <taxon>Tracheophyta</taxon>
        <taxon>Spermatophyta</taxon>
        <taxon>Magnoliopsida</taxon>
        <taxon>eudicotyledons</taxon>
        <taxon>Gunneridae</taxon>
        <taxon>Pentapetalae</taxon>
        <taxon>rosids</taxon>
        <taxon>malvids</taxon>
        <taxon>Brassicales</taxon>
        <taxon>Brassicaceae</taxon>
        <taxon>Camelineae</taxon>
        <taxon>Arabidopsis</taxon>
    </lineage>
</organism>
<evidence type="ECO:0000255" key="1">
    <source>
        <dbReference type="PROSITE-ProRule" id="PRU00703"/>
    </source>
</evidence>
<evidence type="ECO:0000305" key="2"/>
<proteinExistence type="evidence at transcript level"/>
<accession>Q8VYD6</accession>
<accession>Q8LCN2</accession>
<accession>Q9FT63</accession>
<reference key="1">
    <citation type="journal article" date="2000" name="Nature">
        <title>Sequence and analysis of chromosome 5 of the plant Arabidopsis thaliana.</title>
        <authorList>
            <person name="Tabata S."/>
            <person name="Kaneko T."/>
            <person name="Nakamura Y."/>
            <person name="Kotani H."/>
            <person name="Kato T."/>
            <person name="Asamizu E."/>
            <person name="Miyajima N."/>
            <person name="Sasamoto S."/>
            <person name="Kimura T."/>
            <person name="Hosouchi T."/>
            <person name="Kawashima K."/>
            <person name="Kohara M."/>
            <person name="Matsumoto M."/>
            <person name="Matsuno A."/>
            <person name="Muraki A."/>
            <person name="Nakayama S."/>
            <person name="Nakazaki N."/>
            <person name="Naruo K."/>
            <person name="Okumura S."/>
            <person name="Shinpo S."/>
            <person name="Takeuchi C."/>
            <person name="Wada T."/>
            <person name="Watanabe A."/>
            <person name="Yamada M."/>
            <person name="Yasuda M."/>
            <person name="Sato S."/>
            <person name="de la Bastide M."/>
            <person name="Huang E."/>
            <person name="Spiegel L."/>
            <person name="Gnoj L."/>
            <person name="O'Shaughnessy A."/>
            <person name="Preston R."/>
            <person name="Habermann K."/>
            <person name="Murray J."/>
            <person name="Johnson D."/>
            <person name="Rohlfing T."/>
            <person name="Nelson J."/>
            <person name="Stoneking T."/>
            <person name="Pepin K."/>
            <person name="Spieth J."/>
            <person name="Sekhon M."/>
            <person name="Armstrong J."/>
            <person name="Becker M."/>
            <person name="Belter E."/>
            <person name="Cordum H."/>
            <person name="Cordes M."/>
            <person name="Courtney L."/>
            <person name="Courtney W."/>
            <person name="Dante M."/>
            <person name="Du H."/>
            <person name="Edwards J."/>
            <person name="Fryman J."/>
            <person name="Haakensen B."/>
            <person name="Lamar E."/>
            <person name="Latreille P."/>
            <person name="Leonard S."/>
            <person name="Meyer R."/>
            <person name="Mulvaney E."/>
            <person name="Ozersky P."/>
            <person name="Riley A."/>
            <person name="Strowmatt C."/>
            <person name="Wagner-McPherson C."/>
            <person name="Wollam A."/>
            <person name="Yoakum M."/>
            <person name="Bell M."/>
            <person name="Dedhia N."/>
            <person name="Parnell L."/>
            <person name="Shah R."/>
            <person name="Rodriguez M."/>
            <person name="Hoon See L."/>
            <person name="Vil D."/>
            <person name="Baker J."/>
            <person name="Kirchoff K."/>
            <person name="Toth K."/>
            <person name="King L."/>
            <person name="Bahret A."/>
            <person name="Miller B."/>
            <person name="Marra M.A."/>
            <person name="Martienssen R."/>
            <person name="McCombie W.R."/>
            <person name="Wilson R.K."/>
            <person name="Murphy G."/>
            <person name="Bancroft I."/>
            <person name="Volckaert G."/>
            <person name="Wambutt R."/>
            <person name="Duesterhoeft A."/>
            <person name="Stiekema W."/>
            <person name="Pohl T."/>
            <person name="Entian K.-D."/>
            <person name="Terryn N."/>
            <person name="Hartley N."/>
            <person name="Bent E."/>
            <person name="Johnson S."/>
            <person name="Langham S.-A."/>
            <person name="McCullagh B."/>
            <person name="Robben J."/>
            <person name="Grymonprez B."/>
            <person name="Zimmermann W."/>
            <person name="Ramsperger U."/>
            <person name="Wedler H."/>
            <person name="Balke K."/>
            <person name="Wedler E."/>
            <person name="Peters S."/>
            <person name="van Staveren M."/>
            <person name="Dirkse W."/>
            <person name="Mooijman P."/>
            <person name="Klein Lankhorst R."/>
            <person name="Weitzenegger T."/>
            <person name="Bothe G."/>
            <person name="Rose M."/>
            <person name="Hauf J."/>
            <person name="Berneiser S."/>
            <person name="Hempel S."/>
            <person name="Feldpausch M."/>
            <person name="Lamberth S."/>
            <person name="Villarroel R."/>
            <person name="Gielen J."/>
            <person name="Ardiles W."/>
            <person name="Bents O."/>
            <person name="Lemcke K."/>
            <person name="Kolesov G."/>
            <person name="Mayer K.F.X."/>
            <person name="Rudd S."/>
            <person name="Schoof H."/>
            <person name="Schueller C."/>
            <person name="Zaccaria P."/>
            <person name="Mewes H.-W."/>
            <person name="Bevan M."/>
            <person name="Fransz P.F."/>
        </authorList>
    </citation>
    <scope>NUCLEOTIDE SEQUENCE [LARGE SCALE GENOMIC DNA]</scope>
    <source>
        <strain>cv. Columbia</strain>
    </source>
</reference>
<reference key="2">
    <citation type="journal article" date="2017" name="Plant J.">
        <title>Araport11: a complete reannotation of the Arabidopsis thaliana reference genome.</title>
        <authorList>
            <person name="Cheng C.Y."/>
            <person name="Krishnakumar V."/>
            <person name="Chan A.P."/>
            <person name="Thibaud-Nissen F."/>
            <person name="Schobel S."/>
            <person name="Town C.D."/>
        </authorList>
    </citation>
    <scope>GENOME REANNOTATION</scope>
    <source>
        <strain>cv. Columbia</strain>
    </source>
</reference>
<reference key="3">
    <citation type="journal article" date="2003" name="Science">
        <title>Empirical analysis of transcriptional activity in the Arabidopsis genome.</title>
        <authorList>
            <person name="Yamada K."/>
            <person name="Lim J."/>
            <person name="Dale J.M."/>
            <person name="Chen H."/>
            <person name="Shinn P."/>
            <person name="Palm C.J."/>
            <person name="Southwick A.M."/>
            <person name="Wu H.C."/>
            <person name="Kim C.J."/>
            <person name="Nguyen M."/>
            <person name="Pham P.K."/>
            <person name="Cheuk R.F."/>
            <person name="Karlin-Newmann G."/>
            <person name="Liu S.X."/>
            <person name="Lam B."/>
            <person name="Sakano H."/>
            <person name="Wu T."/>
            <person name="Yu G."/>
            <person name="Miranda M."/>
            <person name="Quach H.L."/>
            <person name="Tripp M."/>
            <person name="Chang C.H."/>
            <person name="Lee J.M."/>
            <person name="Toriumi M.J."/>
            <person name="Chan M.M."/>
            <person name="Tang C.C."/>
            <person name="Onodera C.S."/>
            <person name="Deng J.M."/>
            <person name="Akiyama K."/>
            <person name="Ansari Y."/>
            <person name="Arakawa T."/>
            <person name="Banh J."/>
            <person name="Banno F."/>
            <person name="Bowser L."/>
            <person name="Brooks S.Y."/>
            <person name="Carninci P."/>
            <person name="Chao Q."/>
            <person name="Choy N."/>
            <person name="Enju A."/>
            <person name="Goldsmith A.D."/>
            <person name="Gurjal M."/>
            <person name="Hansen N.F."/>
            <person name="Hayashizaki Y."/>
            <person name="Johnson-Hopson C."/>
            <person name="Hsuan V.W."/>
            <person name="Iida K."/>
            <person name="Karnes M."/>
            <person name="Khan S."/>
            <person name="Koesema E."/>
            <person name="Ishida J."/>
            <person name="Jiang P.X."/>
            <person name="Jones T."/>
            <person name="Kawai J."/>
            <person name="Kamiya A."/>
            <person name="Meyers C."/>
            <person name="Nakajima M."/>
            <person name="Narusaka M."/>
            <person name="Seki M."/>
            <person name="Sakurai T."/>
            <person name="Satou M."/>
            <person name="Tamse R."/>
            <person name="Vaysberg M."/>
            <person name="Wallender E.K."/>
            <person name="Wong C."/>
            <person name="Yamamura Y."/>
            <person name="Yuan S."/>
            <person name="Shinozaki K."/>
            <person name="Davis R.W."/>
            <person name="Theologis A."/>
            <person name="Ecker J.R."/>
        </authorList>
    </citation>
    <scope>NUCLEOTIDE SEQUENCE [LARGE SCALE MRNA]</scope>
    <source>
        <strain>cv. Columbia</strain>
    </source>
</reference>
<reference key="4">
    <citation type="submission" date="2002-03" db="EMBL/GenBank/DDBJ databases">
        <title>Full-length cDNA from Arabidopsis thaliana.</title>
        <authorList>
            <person name="Brover V.V."/>
            <person name="Troukhan M.E."/>
            <person name="Alexandrov N.A."/>
            <person name="Lu Y.-P."/>
            <person name="Flavell R.B."/>
            <person name="Feldmann K.A."/>
        </authorList>
    </citation>
    <scope>NUCLEOTIDE SEQUENCE [LARGE SCALE MRNA]</scope>
</reference>
<reference key="5">
    <citation type="journal article" date="2004" name="Plant Cell">
        <title>Genome-wide analysis of Arabidopsis pentatricopeptide repeat proteins reveals their essential role in organelle biogenesis.</title>
        <authorList>
            <person name="Lurin C."/>
            <person name="Andres C."/>
            <person name="Aubourg S."/>
            <person name="Bellaoui M."/>
            <person name="Bitton F."/>
            <person name="Bruyere C."/>
            <person name="Caboche M."/>
            <person name="Debast C."/>
            <person name="Gualberto J."/>
            <person name="Hoffmann B."/>
            <person name="Lecharny A."/>
            <person name="Le Ret M."/>
            <person name="Martin-Magniette M.-L."/>
            <person name="Mireau H."/>
            <person name="Peeters N."/>
            <person name="Renou J.-P."/>
            <person name="Szurek B."/>
            <person name="Taconnat L."/>
            <person name="Small I."/>
        </authorList>
    </citation>
    <scope>GENE FAMILY</scope>
</reference>
<reference key="6">
    <citation type="journal article" date="2009" name="BMC Genomics">
        <title>Genome wide expression analysis of CBS domain containing proteins in Arabidopsis thaliana (L.) Heynh and Oryza sativa L. reveals their developmental and stress regulation.</title>
        <authorList>
            <person name="Kushwaha H.R."/>
            <person name="Singh A.K."/>
            <person name="Sopory S.K."/>
            <person name="Singla-Pareek S.L."/>
            <person name="Pareek A."/>
        </authorList>
    </citation>
    <scope>GENE FAMILY</scope>
    <scope>NOMENCLATURE</scope>
</reference>
<keyword id="KW-0129">CBS domain</keyword>
<keyword id="KW-1185">Reference proteome</keyword>
<keyword id="KW-0677">Repeat</keyword>
<gene>
    <name type="primary">CBSPPR1</name>
    <name type="ordered locus">At5g10690</name>
    <name type="ORF">MAJ23.50</name>
</gene>
<comment type="similarity">
    <text evidence="2">Belongs to the PPR family. P subfamily.</text>
</comment>
<comment type="sequence caution" evidence="2">
    <conflict type="erroneous gene model prediction">
        <sequence resource="EMBL-CDS" id="CAC08243"/>
    </conflict>
</comment>
<comment type="online information" name="Pentatricopeptide repeat proteins">
    <link uri="https://ppr.plantenergy.uwa.edu.au"/>
</comment>
<protein>
    <recommendedName>
        <fullName>Pentatricopeptide repeat-containing protein At5g10690</fullName>
    </recommendedName>
    <alternativeName>
        <fullName>CBS domain-containing protein CBSPPR1</fullName>
    </alternativeName>
</protein>
<feature type="chain" id="PRO_0000363511" description="Pentatricopeptide repeat-containing protein At5g10690">
    <location>
        <begin position="1"/>
        <end position="580"/>
    </location>
</feature>
<feature type="repeat" description="PPR 1">
    <location>
        <begin position="76"/>
        <end position="110"/>
    </location>
</feature>
<feature type="repeat" description="PPR 2">
    <location>
        <begin position="112"/>
        <end position="142"/>
    </location>
</feature>
<feature type="repeat" description="PPR 3">
    <location>
        <begin position="151"/>
        <end position="181"/>
    </location>
</feature>
<feature type="repeat" description="PPR 4">
    <location>
        <begin position="189"/>
        <end position="223"/>
    </location>
</feature>
<feature type="repeat" description="PPR 5">
    <location>
        <begin position="224"/>
        <end position="254"/>
    </location>
</feature>
<feature type="repeat" description="PPR 6">
    <location>
        <begin position="266"/>
        <end position="296"/>
    </location>
</feature>
<feature type="repeat" description="PPR 7">
    <location>
        <begin position="302"/>
        <end position="337"/>
    </location>
</feature>
<feature type="repeat" description="PPR 8">
    <location>
        <begin position="342"/>
        <end position="376"/>
    </location>
</feature>
<feature type="repeat" description="PPR 9">
    <location>
        <begin position="382"/>
        <end position="417"/>
    </location>
</feature>
<feature type="domain" description="CBS" evidence="1">
    <location>
        <begin position="486"/>
        <end position="553"/>
    </location>
</feature>
<feature type="sequence conflict" description="In Ref. 4; AAM63500." evidence="2" ref="4">
    <original>N</original>
    <variation>K</variation>
    <location>
        <position position="92"/>
    </location>
</feature>
<feature type="sequence conflict" description="In Ref. 4; AAM63500." evidence="2" ref="4">
    <original>T</original>
    <variation>N</variation>
    <location>
        <position position="147"/>
    </location>
</feature>
<feature type="sequence conflict" description="In Ref. 4; AAM63500." evidence="2" ref="4">
    <original>K</original>
    <variation>N</variation>
    <location>
        <position position="539"/>
    </location>
</feature>
<sequence length="580" mass="64491">MNRISAISTLVTPLPLLPSCSFVPTRRCYPRRATPYSRRINLKPLTSRIVLLTRRRQLGQIVEEVEAAKKRYGRLNTIVMNSVLEACVHCGNIDLALRMFHEMAEPGGIGVDSISYATILKGLGKARRIDEAFQMLETIEYGTAAGTPKLSSSLIYGLLDALINAGDLRRANGLLARYDILLLDHGTPSVLIYNLLMKGYVNSESPQAAINLLDEMLRLRLEPDRLTYNTLIHACIKCGDLDAAMKFFNDMKEKAEEYYDDFLQPDVVTYTTLVKGFGDATDLLSLQEIFLEMKLCENVFIDRTAFTAVVDAMLKCGSTSGALCVFGEILKRSGANEVLRPKPHLYLSMMRAFAVQGDYGMVRNLYLRLWPDSSGSISKAVQQEADNLLMEAALNDGQLDEALGILLSIVRRWKTIPWTTSGGMAAVRLETLLGFSKSILRPHLLSKVIPSEPIESIMIRFEATRPLLGTLQLKNVAMRFFKEQVVPIVDDRGSCIGLLHREDCNNLDAPLVSMMRSPPTCVSTTTSIGRVVDLVLEKKLKMVIVVHCGNFSGSGYSSKAVGAFTRAQLYRLFESEQKLL</sequence>
<name>PP374_ARATH</name>
<dbReference type="EMBL" id="AL392144">
    <property type="protein sequence ID" value="CAC08243.1"/>
    <property type="status" value="ALT_SEQ"/>
    <property type="molecule type" value="Genomic_DNA"/>
</dbReference>
<dbReference type="EMBL" id="CP002688">
    <property type="protein sequence ID" value="AED91581.1"/>
    <property type="molecule type" value="Genomic_DNA"/>
</dbReference>
<dbReference type="EMBL" id="CP002688">
    <property type="protein sequence ID" value="ANM70888.1"/>
    <property type="molecule type" value="Genomic_DNA"/>
</dbReference>
<dbReference type="EMBL" id="AY072152">
    <property type="protein sequence ID" value="AAL59974.1"/>
    <property type="molecule type" value="mRNA"/>
</dbReference>
<dbReference type="EMBL" id="AY096408">
    <property type="protein sequence ID" value="AAM20048.1"/>
    <property type="molecule type" value="mRNA"/>
</dbReference>
<dbReference type="EMBL" id="AY086499">
    <property type="protein sequence ID" value="AAM63500.1"/>
    <property type="molecule type" value="mRNA"/>
</dbReference>
<dbReference type="RefSeq" id="NP_001332464.1">
    <property type="nucleotide sequence ID" value="NM_001343131.1"/>
</dbReference>
<dbReference type="RefSeq" id="NP_568233.1">
    <property type="nucleotide sequence ID" value="NM_121106.4"/>
</dbReference>
<dbReference type="SMR" id="Q8VYD6"/>
<dbReference type="FunCoup" id="Q8VYD6">
    <property type="interactions" value="1472"/>
</dbReference>
<dbReference type="STRING" id="3702.Q8VYD6"/>
<dbReference type="PaxDb" id="3702-AT5G10690.1"/>
<dbReference type="ProteomicsDB" id="249003"/>
<dbReference type="EnsemblPlants" id="AT5G10690.1">
    <property type="protein sequence ID" value="AT5G10690.1"/>
    <property type="gene ID" value="AT5G10690"/>
</dbReference>
<dbReference type="EnsemblPlants" id="AT5G10690.2">
    <property type="protein sequence ID" value="AT5G10690.2"/>
    <property type="gene ID" value="AT5G10690"/>
</dbReference>
<dbReference type="GeneID" id="830933"/>
<dbReference type="Gramene" id="AT5G10690.1">
    <property type="protein sequence ID" value="AT5G10690.1"/>
    <property type="gene ID" value="AT5G10690"/>
</dbReference>
<dbReference type="Gramene" id="AT5G10690.2">
    <property type="protein sequence ID" value="AT5G10690.2"/>
    <property type="gene ID" value="AT5G10690"/>
</dbReference>
<dbReference type="KEGG" id="ath:AT5G10690"/>
<dbReference type="Araport" id="AT5G10690"/>
<dbReference type="TAIR" id="AT5G10690"/>
<dbReference type="eggNOG" id="KOG4197">
    <property type="taxonomic scope" value="Eukaryota"/>
</dbReference>
<dbReference type="HOGENOM" id="CLU_027035_0_0_1"/>
<dbReference type="InParanoid" id="Q8VYD6"/>
<dbReference type="OMA" id="EDCNNLD"/>
<dbReference type="PhylomeDB" id="Q8VYD6"/>
<dbReference type="PRO" id="PR:Q8VYD6"/>
<dbReference type="Proteomes" id="UP000006548">
    <property type="component" value="Chromosome 5"/>
</dbReference>
<dbReference type="ExpressionAtlas" id="Q8VYD6">
    <property type="expression patterns" value="baseline and differential"/>
</dbReference>
<dbReference type="GO" id="GO:0003729">
    <property type="term" value="F:mRNA binding"/>
    <property type="evidence" value="ECO:0000314"/>
    <property type="project" value="TAIR"/>
</dbReference>
<dbReference type="Gene3D" id="3.10.580.10">
    <property type="entry name" value="CBS-domain"/>
    <property type="match status" value="1"/>
</dbReference>
<dbReference type="Gene3D" id="1.25.40.10">
    <property type="entry name" value="Tetratricopeptide repeat domain"/>
    <property type="match status" value="3"/>
</dbReference>
<dbReference type="InterPro" id="IPR044781">
    <property type="entry name" value="At5g10690-like"/>
</dbReference>
<dbReference type="InterPro" id="IPR000644">
    <property type="entry name" value="CBS_dom"/>
</dbReference>
<dbReference type="InterPro" id="IPR046342">
    <property type="entry name" value="CBS_dom_sf"/>
</dbReference>
<dbReference type="InterPro" id="IPR002885">
    <property type="entry name" value="Pentatricopeptide_rpt"/>
</dbReference>
<dbReference type="InterPro" id="IPR011990">
    <property type="entry name" value="TPR-like_helical_dom_sf"/>
</dbReference>
<dbReference type="NCBIfam" id="TIGR00756">
    <property type="entry name" value="PPR"/>
    <property type="match status" value="4"/>
</dbReference>
<dbReference type="PANTHER" id="PTHR47581">
    <property type="entry name" value="OS09G0431600 PROTEIN"/>
    <property type="match status" value="1"/>
</dbReference>
<dbReference type="PANTHER" id="PTHR47581:SF2">
    <property type="entry name" value="OS09G0431600 PROTEIN"/>
    <property type="match status" value="1"/>
</dbReference>
<dbReference type="Pfam" id="PF01535">
    <property type="entry name" value="PPR"/>
    <property type="match status" value="1"/>
</dbReference>
<dbReference type="Pfam" id="PF13041">
    <property type="entry name" value="PPR_2"/>
    <property type="match status" value="2"/>
</dbReference>
<dbReference type="SUPFAM" id="SSF54631">
    <property type="entry name" value="CBS-domain pair"/>
    <property type="match status" value="1"/>
</dbReference>
<dbReference type="PROSITE" id="PS51371">
    <property type="entry name" value="CBS"/>
    <property type="match status" value="1"/>
</dbReference>
<dbReference type="PROSITE" id="PS51375">
    <property type="entry name" value="PPR"/>
    <property type="match status" value="7"/>
</dbReference>